<protein>
    <recommendedName>
        <fullName evidence="1">Aspartyl/glutamyl-tRNA(Asn/Gln) amidotransferase subunit B</fullName>
        <shortName evidence="1">Asp/Glu-ADT subunit B</shortName>
        <ecNumber evidence="1">6.3.5.-</ecNumber>
    </recommendedName>
</protein>
<reference key="1">
    <citation type="submission" date="2007-07" db="EMBL/GenBank/DDBJ databases">
        <title>Complete genome sequence of Campylobacter hominis ATCC BAA-381, a commensal isolated from the human gastrointestinal tract.</title>
        <authorList>
            <person name="Fouts D.E."/>
            <person name="Mongodin E.F."/>
            <person name="Puiu D."/>
            <person name="Sebastian Y."/>
            <person name="Miller W.G."/>
            <person name="Mandrell R.E."/>
            <person name="Nelson K.E."/>
        </authorList>
    </citation>
    <scope>NUCLEOTIDE SEQUENCE [LARGE SCALE GENOMIC DNA]</scope>
    <source>
        <strain>ATCC BAA-381 / DSM 21671 / CCUG 45161 / LMG 19568 / NCTC 13146 / CH001A</strain>
    </source>
</reference>
<organism>
    <name type="scientific">Campylobacter hominis (strain ATCC BAA-381 / DSM 21671 / CCUG 45161 / LMG 19568 / NCTC 13146 / CH001A)</name>
    <dbReference type="NCBI Taxonomy" id="360107"/>
    <lineage>
        <taxon>Bacteria</taxon>
        <taxon>Pseudomonadati</taxon>
        <taxon>Campylobacterota</taxon>
        <taxon>Epsilonproteobacteria</taxon>
        <taxon>Campylobacterales</taxon>
        <taxon>Campylobacteraceae</taxon>
        <taxon>Campylobacter</taxon>
    </lineage>
</organism>
<name>GATB_CAMHC</name>
<accession>A7I1W4</accession>
<evidence type="ECO:0000255" key="1">
    <source>
        <dbReference type="HAMAP-Rule" id="MF_00121"/>
    </source>
</evidence>
<gene>
    <name evidence="1" type="primary">gatB</name>
    <name type="ordered locus">CHAB381_0944</name>
</gene>
<proteinExistence type="inferred from homology"/>
<dbReference type="EC" id="6.3.5.-" evidence="1"/>
<dbReference type="EMBL" id="CP000776">
    <property type="protein sequence ID" value="ABS50951.1"/>
    <property type="molecule type" value="Genomic_DNA"/>
</dbReference>
<dbReference type="RefSeq" id="WP_012108798.1">
    <property type="nucleotide sequence ID" value="NC_009714.1"/>
</dbReference>
<dbReference type="SMR" id="A7I1W4"/>
<dbReference type="STRING" id="360107.CHAB381_0944"/>
<dbReference type="KEGG" id="cha:CHAB381_0944"/>
<dbReference type="eggNOG" id="COG0064">
    <property type="taxonomic scope" value="Bacteria"/>
</dbReference>
<dbReference type="HOGENOM" id="CLU_019240_0_0_7"/>
<dbReference type="OrthoDB" id="9804078at2"/>
<dbReference type="Proteomes" id="UP000002407">
    <property type="component" value="Chromosome"/>
</dbReference>
<dbReference type="GO" id="GO:0050566">
    <property type="term" value="F:asparaginyl-tRNA synthase (glutamine-hydrolyzing) activity"/>
    <property type="evidence" value="ECO:0007669"/>
    <property type="project" value="RHEA"/>
</dbReference>
<dbReference type="GO" id="GO:0005524">
    <property type="term" value="F:ATP binding"/>
    <property type="evidence" value="ECO:0007669"/>
    <property type="project" value="UniProtKB-KW"/>
</dbReference>
<dbReference type="GO" id="GO:0050567">
    <property type="term" value="F:glutaminyl-tRNA synthase (glutamine-hydrolyzing) activity"/>
    <property type="evidence" value="ECO:0007669"/>
    <property type="project" value="UniProtKB-UniRule"/>
</dbReference>
<dbReference type="GO" id="GO:0070681">
    <property type="term" value="P:glutaminyl-tRNAGln biosynthesis via transamidation"/>
    <property type="evidence" value="ECO:0007669"/>
    <property type="project" value="TreeGrafter"/>
</dbReference>
<dbReference type="GO" id="GO:0006412">
    <property type="term" value="P:translation"/>
    <property type="evidence" value="ECO:0007669"/>
    <property type="project" value="UniProtKB-UniRule"/>
</dbReference>
<dbReference type="FunFam" id="1.10.10.410:FF:000001">
    <property type="entry name" value="Aspartyl/glutamyl-tRNA(Asn/Gln) amidotransferase subunit B"/>
    <property type="match status" value="1"/>
</dbReference>
<dbReference type="Gene3D" id="1.10.10.410">
    <property type="match status" value="1"/>
</dbReference>
<dbReference type="Gene3D" id="1.10.150.380">
    <property type="entry name" value="GatB domain, N-terminal subdomain"/>
    <property type="match status" value="1"/>
</dbReference>
<dbReference type="HAMAP" id="MF_00121">
    <property type="entry name" value="GatB"/>
    <property type="match status" value="1"/>
</dbReference>
<dbReference type="InterPro" id="IPR017959">
    <property type="entry name" value="Asn/Gln-tRNA_amidoTrfase_suB/E"/>
</dbReference>
<dbReference type="InterPro" id="IPR006075">
    <property type="entry name" value="Asn/Gln-tRNA_Trfase_suB/E_cat"/>
</dbReference>
<dbReference type="InterPro" id="IPR018027">
    <property type="entry name" value="Asn/Gln_amidotransferase"/>
</dbReference>
<dbReference type="InterPro" id="IPR003789">
    <property type="entry name" value="Asn/Gln_tRNA_amidoTrase-B-like"/>
</dbReference>
<dbReference type="InterPro" id="IPR004413">
    <property type="entry name" value="GatB"/>
</dbReference>
<dbReference type="InterPro" id="IPR042114">
    <property type="entry name" value="GatB_C_1"/>
</dbReference>
<dbReference type="InterPro" id="IPR023168">
    <property type="entry name" value="GatB_Yqey_C_2"/>
</dbReference>
<dbReference type="InterPro" id="IPR017958">
    <property type="entry name" value="Gln-tRNA_amidoTrfase_suB_CS"/>
</dbReference>
<dbReference type="InterPro" id="IPR014746">
    <property type="entry name" value="Gln_synth/guanido_kin_cat_dom"/>
</dbReference>
<dbReference type="NCBIfam" id="TIGR00133">
    <property type="entry name" value="gatB"/>
    <property type="match status" value="1"/>
</dbReference>
<dbReference type="NCBIfam" id="NF004012">
    <property type="entry name" value="PRK05477.1-2"/>
    <property type="match status" value="1"/>
</dbReference>
<dbReference type="NCBIfam" id="NF004014">
    <property type="entry name" value="PRK05477.1-4"/>
    <property type="match status" value="1"/>
</dbReference>
<dbReference type="PANTHER" id="PTHR11659">
    <property type="entry name" value="GLUTAMYL-TRNA GLN AMIDOTRANSFERASE SUBUNIT B MITOCHONDRIAL AND PROKARYOTIC PET112-RELATED"/>
    <property type="match status" value="1"/>
</dbReference>
<dbReference type="PANTHER" id="PTHR11659:SF0">
    <property type="entry name" value="GLUTAMYL-TRNA(GLN) AMIDOTRANSFERASE SUBUNIT B, MITOCHONDRIAL"/>
    <property type="match status" value="1"/>
</dbReference>
<dbReference type="Pfam" id="PF02934">
    <property type="entry name" value="GatB_N"/>
    <property type="match status" value="1"/>
</dbReference>
<dbReference type="Pfam" id="PF02637">
    <property type="entry name" value="GatB_Yqey"/>
    <property type="match status" value="1"/>
</dbReference>
<dbReference type="SMART" id="SM00845">
    <property type="entry name" value="GatB_Yqey"/>
    <property type="match status" value="1"/>
</dbReference>
<dbReference type="SUPFAM" id="SSF89095">
    <property type="entry name" value="GatB/YqeY motif"/>
    <property type="match status" value="1"/>
</dbReference>
<dbReference type="SUPFAM" id="SSF55931">
    <property type="entry name" value="Glutamine synthetase/guanido kinase"/>
    <property type="match status" value="1"/>
</dbReference>
<dbReference type="PROSITE" id="PS01234">
    <property type="entry name" value="GATB"/>
    <property type="match status" value="1"/>
</dbReference>
<feature type="chain" id="PRO_1000015953" description="Aspartyl/glutamyl-tRNA(Asn/Gln) amidotransferase subunit B">
    <location>
        <begin position="1"/>
        <end position="473"/>
    </location>
</feature>
<comment type="function">
    <text evidence="1">Allows the formation of correctly charged Asn-tRNA(Asn) or Gln-tRNA(Gln) through the transamidation of misacylated Asp-tRNA(Asn) or Glu-tRNA(Gln) in organisms which lack either or both of asparaginyl-tRNA or glutaminyl-tRNA synthetases. The reaction takes place in the presence of glutamine and ATP through an activated phospho-Asp-tRNA(Asn) or phospho-Glu-tRNA(Gln).</text>
</comment>
<comment type="catalytic activity">
    <reaction evidence="1">
        <text>L-glutamyl-tRNA(Gln) + L-glutamine + ATP + H2O = L-glutaminyl-tRNA(Gln) + L-glutamate + ADP + phosphate + H(+)</text>
        <dbReference type="Rhea" id="RHEA:17521"/>
        <dbReference type="Rhea" id="RHEA-COMP:9681"/>
        <dbReference type="Rhea" id="RHEA-COMP:9684"/>
        <dbReference type="ChEBI" id="CHEBI:15377"/>
        <dbReference type="ChEBI" id="CHEBI:15378"/>
        <dbReference type="ChEBI" id="CHEBI:29985"/>
        <dbReference type="ChEBI" id="CHEBI:30616"/>
        <dbReference type="ChEBI" id="CHEBI:43474"/>
        <dbReference type="ChEBI" id="CHEBI:58359"/>
        <dbReference type="ChEBI" id="CHEBI:78520"/>
        <dbReference type="ChEBI" id="CHEBI:78521"/>
        <dbReference type="ChEBI" id="CHEBI:456216"/>
    </reaction>
</comment>
<comment type="catalytic activity">
    <reaction evidence="1">
        <text>L-aspartyl-tRNA(Asn) + L-glutamine + ATP + H2O = L-asparaginyl-tRNA(Asn) + L-glutamate + ADP + phosphate + 2 H(+)</text>
        <dbReference type="Rhea" id="RHEA:14513"/>
        <dbReference type="Rhea" id="RHEA-COMP:9674"/>
        <dbReference type="Rhea" id="RHEA-COMP:9677"/>
        <dbReference type="ChEBI" id="CHEBI:15377"/>
        <dbReference type="ChEBI" id="CHEBI:15378"/>
        <dbReference type="ChEBI" id="CHEBI:29985"/>
        <dbReference type="ChEBI" id="CHEBI:30616"/>
        <dbReference type="ChEBI" id="CHEBI:43474"/>
        <dbReference type="ChEBI" id="CHEBI:58359"/>
        <dbReference type="ChEBI" id="CHEBI:78515"/>
        <dbReference type="ChEBI" id="CHEBI:78516"/>
        <dbReference type="ChEBI" id="CHEBI:456216"/>
    </reaction>
</comment>
<comment type="subunit">
    <text evidence="1">Heterotrimer of A, B and C subunits.</text>
</comment>
<comment type="similarity">
    <text evidence="1">Belongs to the GatB/GatE family. GatB subfamily.</text>
</comment>
<sequence length="473" mass="53414">MFETIIGLEVHCQLNTKTKIFCSCPTSFGDKANVHVCPTCLALPGALPVLNKEAVKKAIMFGTAVNATINKKSVFDRKNYFYPDLPKAYQISQFTIPIVEHGELFININGENKRIGITRAHLEEDAGKNTHEEGRSLVDLNRAGTPLLEIVSEPDMRSGDEAVAYLKKLHSILRFINISDANMQEGSFRCDVNVSIRPKGDEKLYTRVEIKNLNSFKFVQKAIEYEVARQIDAWEDGKYSELVVQETRLFDTSNFTTRSMRSKEDSAEYRYFPDPDLLTVEISDEMLEEARKIPELPNEKKERYINELGLKKDDAEVIISSYEHAKFFEDLINAGHEPKLCVTWLNVELNGRLKNGLTIEDSPIDSAKMSDLLSRIEDGTISQKAAKEVLDFIMENIEISVDDVIKKLGLKQVSDDATILAVIDAVISKNEQKVAEYRNGKDKLFGFFVGQVMKEGKGAFNPAKVNELLKQKL</sequence>
<keyword id="KW-0067">ATP-binding</keyword>
<keyword id="KW-0436">Ligase</keyword>
<keyword id="KW-0547">Nucleotide-binding</keyword>
<keyword id="KW-0648">Protein biosynthesis</keyword>
<keyword id="KW-1185">Reference proteome</keyword>